<keyword id="KW-0235">DNA replication</keyword>
<keyword id="KW-0539">Nucleus</keyword>
<keyword id="KW-1185">Reference proteome</keyword>
<protein>
    <recommendedName>
        <fullName>Probable DNA replication complex GINS protein PSF2</fullName>
    </recommendedName>
</protein>
<comment type="function">
    <text evidence="1">The GINS complex plays an essential role in the initiation of DNA replication.</text>
</comment>
<comment type="subunit">
    <text evidence="1">Component of the GINS complex which is a heterotetramer of SLD5, PSF1, PSF2 and PSF3.</text>
</comment>
<comment type="subcellular location">
    <subcellularLocation>
        <location evidence="1">Nucleus</location>
    </subcellularLocation>
</comment>
<comment type="similarity">
    <text evidence="2">Belongs to the GINS2/PSF2 family.</text>
</comment>
<sequence>MAISPEEILHIAYEELVEIEPMTSIPELRLLERTYPPLMPLDIARIPLYAALLLKKSNMCKIRLPSYLQLESLKMSMDVEIEKADEYSCIHPYFFPLATELLENCYNVESIEESKMIVEKIKEIRLAKTLKGIKCLDGKALNMNNITLFEFNEIKELILGSAEVGRRIEDLAKDQ</sequence>
<organism>
    <name type="scientific">Encephalitozoon cuniculi (strain GB-M1)</name>
    <name type="common">Microsporidian parasite</name>
    <dbReference type="NCBI Taxonomy" id="284813"/>
    <lineage>
        <taxon>Eukaryota</taxon>
        <taxon>Fungi</taxon>
        <taxon>Fungi incertae sedis</taxon>
        <taxon>Microsporidia</taxon>
        <taxon>Unikaryonidae</taxon>
        <taxon>Encephalitozoon</taxon>
    </lineage>
</organism>
<feature type="chain" id="PRO_0000194820" description="Probable DNA replication complex GINS protein PSF2">
    <location>
        <begin position="1"/>
        <end position="175"/>
    </location>
</feature>
<gene>
    <name type="ordered locus">ECU06_1410</name>
</gene>
<reference key="1">
    <citation type="journal article" date="2001" name="Nature">
        <title>Genome sequence and gene compaction of the eukaryote parasite Encephalitozoon cuniculi.</title>
        <authorList>
            <person name="Katinka M.D."/>
            <person name="Duprat S."/>
            <person name="Cornillot E."/>
            <person name="Metenier G."/>
            <person name="Thomarat F."/>
            <person name="Prensier G."/>
            <person name="Barbe V."/>
            <person name="Peyretaillade E."/>
            <person name="Brottier P."/>
            <person name="Wincker P."/>
            <person name="Delbac F."/>
            <person name="El Alaoui H."/>
            <person name="Peyret P."/>
            <person name="Saurin W."/>
            <person name="Gouy M."/>
            <person name="Weissenbach J."/>
            <person name="Vivares C.P."/>
        </authorList>
    </citation>
    <scope>NUCLEOTIDE SEQUENCE [LARGE SCALE GENOMIC DNA]</scope>
    <source>
        <strain>GB-M1</strain>
    </source>
</reference>
<accession>Q8SV74</accession>
<proteinExistence type="inferred from homology"/>
<evidence type="ECO:0000250" key="1"/>
<evidence type="ECO:0000305" key="2"/>
<name>PSF2_ENCCU</name>
<dbReference type="EMBL" id="AL590446">
    <property type="protein sequence ID" value="CAD25501.1"/>
    <property type="molecule type" value="Genomic_DNA"/>
</dbReference>
<dbReference type="RefSeq" id="NP_585897.1">
    <property type="nucleotide sequence ID" value="NM_001041519.1"/>
</dbReference>
<dbReference type="SMR" id="Q8SV74"/>
<dbReference type="FunCoup" id="Q8SV74">
    <property type="interactions" value="193"/>
</dbReference>
<dbReference type="STRING" id="284813.Q8SV74"/>
<dbReference type="GeneID" id="859324"/>
<dbReference type="KEGG" id="ecu:ECU06_1410"/>
<dbReference type="VEuPathDB" id="MicrosporidiaDB:ECU06_1410"/>
<dbReference type="HOGENOM" id="CLU_078274_3_1_1"/>
<dbReference type="InParanoid" id="Q8SV74"/>
<dbReference type="OMA" id="GPYYMEL"/>
<dbReference type="OrthoDB" id="1938138at2759"/>
<dbReference type="Proteomes" id="UP000000819">
    <property type="component" value="Chromosome VI"/>
</dbReference>
<dbReference type="GO" id="GO:0000811">
    <property type="term" value="C:GINS complex"/>
    <property type="evidence" value="ECO:0007669"/>
    <property type="project" value="TreeGrafter"/>
</dbReference>
<dbReference type="GO" id="GO:0006260">
    <property type="term" value="P:DNA replication"/>
    <property type="evidence" value="ECO:0007669"/>
    <property type="project" value="UniProtKB-KW"/>
</dbReference>
<dbReference type="GO" id="GO:0000727">
    <property type="term" value="P:double-strand break repair via break-induced replication"/>
    <property type="evidence" value="ECO:0007669"/>
    <property type="project" value="TreeGrafter"/>
</dbReference>
<dbReference type="CDD" id="cd11712">
    <property type="entry name" value="GINS_A_psf2"/>
    <property type="match status" value="1"/>
</dbReference>
<dbReference type="CDD" id="cd21694">
    <property type="entry name" value="GINS_B_Psf2"/>
    <property type="match status" value="1"/>
</dbReference>
<dbReference type="Gene3D" id="1.20.58.1020">
    <property type="match status" value="1"/>
</dbReference>
<dbReference type="Gene3D" id="3.40.5.50">
    <property type="match status" value="1"/>
</dbReference>
<dbReference type="InterPro" id="IPR021151">
    <property type="entry name" value="GINS_A"/>
</dbReference>
<dbReference type="InterPro" id="IPR036224">
    <property type="entry name" value="GINS_bundle-like_dom_sf"/>
</dbReference>
<dbReference type="InterPro" id="IPR007257">
    <property type="entry name" value="GINS_Psf2"/>
</dbReference>
<dbReference type="InterPro" id="IPR056784">
    <property type="entry name" value="PSF2_N"/>
</dbReference>
<dbReference type="PANTHER" id="PTHR12772">
    <property type="entry name" value="DNA REPLICATION COMPLEX GINS PROTEIN PSF2"/>
    <property type="match status" value="1"/>
</dbReference>
<dbReference type="PANTHER" id="PTHR12772:SF0">
    <property type="entry name" value="DNA REPLICATION COMPLEX GINS PROTEIN PSF2"/>
    <property type="match status" value="1"/>
</dbReference>
<dbReference type="Pfam" id="PF25005">
    <property type="entry name" value="PSF2_N"/>
    <property type="match status" value="1"/>
</dbReference>
<dbReference type="Pfam" id="PF05916">
    <property type="entry name" value="Sld5"/>
    <property type="match status" value="1"/>
</dbReference>
<dbReference type="PIRSF" id="PIRSF028998">
    <property type="entry name" value="GINS_Psf2_subgr"/>
    <property type="match status" value="1"/>
</dbReference>
<dbReference type="SUPFAM" id="SSF158573">
    <property type="entry name" value="GINS helical bundle-like"/>
    <property type="match status" value="1"/>
</dbReference>
<dbReference type="SUPFAM" id="SSF160059">
    <property type="entry name" value="PriA/YqbF domain"/>
    <property type="match status" value="1"/>
</dbReference>